<feature type="chain" id="PRO_0000282442" description="Eukaryotic initiation factor 4A-III homolog A">
    <location>
        <begin position="1"/>
        <end position="404"/>
    </location>
</feature>
<feature type="domain" description="Helicase ATP-binding" evidence="2">
    <location>
        <begin position="62"/>
        <end position="232"/>
    </location>
</feature>
<feature type="domain" description="Helicase C-terminal" evidence="3">
    <location>
        <begin position="243"/>
        <end position="404"/>
    </location>
</feature>
<feature type="region of interest" description="Disordered" evidence="4">
    <location>
        <begin position="1"/>
        <end position="20"/>
    </location>
</feature>
<feature type="short sequence motif" description="Q motif">
    <location>
        <begin position="31"/>
        <end position="59"/>
    </location>
</feature>
<feature type="short sequence motif" description="DEAD box">
    <location>
        <begin position="180"/>
        <end position="183"/>
    </location>
</feature>
<feature type="binding site" evidence="2">
    <location>
        <begin position="75"/>
        <end position="82"/>
    </location>
    <ligand>
        <name>ATP</name>
        <dbReference type="ChEBI" id="CHEBI:30616"/>
    </ligand>
</feature>
<name>IF43A_ORYSJ</name>
<sequence length="404" mass="45599">MAAATTSRRGPGAMDDENLTFETSPGVEVISSFDQMGIRDDLLRGIYAYGFEKPSAIQQRAVLPIISGRDVIAQAQSGTGKTSMISLSVCQIVDTAVREVQALILSPTRELAAQTERVMLAIGDFINIQVHACIGGKSIGEDIRKLEHGVHVVSGTPGRVCDMIKRRTLRTRAIKLLILDEADEMLGRGFKDQIYDVYRYLPPELQVCLISATLPHEILEMTSKFMTDPVRILVKRDELTLEGIKQFFVAVEKEEWKFDTLCDLYDTLTITQAVIFCNTKRKVDWLTERMRSNNFTVSAMHGDMPQKERDAIMGEFRSGATRVLITTDVWARGLDVQQVSLVINYDLPNNRELYIHRIGRSGRFGRKGVAINFVKKEDIRILRDIEQYYSTQIDEMPMNVADLI</sequence>
<evidence type="ECO:0000250" key="1">
    <source>
        <dbReference type="UniProtKB" id="P38919"/>
    </source>
</evidence>
<evidence type="ECO:0000255" key="2">
    <source>
        <dbReference type="PROSITE-ProRule" id="PRU00541"/>
    </source>
</evidence>
<evidence type="ECO:0000255" key="3">
    <source>
        <dbReference type="PROSITE-ProRule" id="PRU00542"/>
    </source>
</evidence>
<evidence type="ECO:0000256" key="4">
    <source>
        <dbReference type="SAM" id="MobiDB-lite"/>
    </source>
</evidence>
<evidence type="ECO:0000269" key="5">
    <source>
    </source>
</evidence>
<evidence type="ECO:0000303" key="6">
    <source>
    </source>
</evidence>
<evidence type="ECO:0000305" key="7"/>
<evidence type="ECO:0000312" key="8">
    <source>
        <dbReference type="EMBL" id="BAD68586.1"/>
    </source>
</evidence>
<evidence type="ECO:0000312" key="9">
    <source>
        <dbReference type="EMBL" id="BAD68952.1"/>
    </source>
</evidence>
<evidence type="ECO:0000312" key="10">
    <source>
        <dbReference type="EMBL" id="BAS73356.1"/>
    </source>
</evidence>
<evidence type="ECO:0000312" key="11">
    <source>
        <dbReference type="EMBL" id="EEE55061.1"/>
    </source>
</evidence>
<gene>
    <name evidence="6" type="primary">EIF4A3A</name>
    <name evidence="7" type="synonym">EIF4A3</name>
    <name evidence="6" type="synonym">RH2</name>
    <name evidence="10" type="ordered locus">Os01g0639100</name>
    <name evidence="7" type="ordered locus">LOC_Os01g45190</name>
    <name evidence="11" type="ORF">OsJ_02769</name>
    <name evidence="8" type="ORF">P0004A09.21</name>
    <name evidence="9" type="ORF">P0696E01.42</name>
</gene>
<accession>Q5VNM3</accession>
<accession>B7EMG9</accession>
<dbReference type="EC" id="3.6.4.13" evidence="7"/>
<dbReference type="EMBL" id="AP003607">
    <property type="protein sequence ID" value="BAD68586.1"/>
    <property type="molecule type" value="Genomic_DNA"/>
</dbReference>
<dbReference type="EMBL" id="AP004367">
    <property type="protein sequence ID" value="BAD68952.1"/>
    <property type="molecule type" value="Genomic_DNA"/>
</dbReference>
<dbReference type="EMBL" id="AP008207">
    <property type="protein sequence ID" value="BAF05587.1"/>
    <property type="molecule type" value="Genomic_DNA"/>
</dbReference>
<dbReference type="EMBL" id="AP014957">
    <property type="protein sequence ID" value="BAS73356.1"/>
    <property type="molecule type" value="Genomic_DNA"/>
</dbReference>
<dbReference type="EMBL" id="CM000138">
    <property type="protein sequence ID" value="EEE55061.1"/>
    <property type="molecule type" value="Genomic_DNA"/>
</dbReference>
<dbReference type="EMBL" id="AK073640">
    <property type="protein sequence ID" value="BAG93566.1"/>
    <property type="molecule type" value="mRNA"/>
</dbReference>
<dbReference type="RefSeq" id="NP_001384966.1">
    <property type="nucleotide sequence ID" value="NM_001398037.1"/>
</dbReference>
<dbReference type="RefSeq" id="XP_015621327.1">
    <property type="nucleotide sequence ID" value="XM_015765841.1"/>
</dbReference>
<dbReference type="SMR" id="Q5VNM3"/>
<dbReference type="FunCoup" id="Q5VNM3">
    <property type="interactions" value="2671"/>
</dbReference>
<dbReference type="STRING" id="39947.Q5VNM3"/>
<dbReference type="PaxDb" id="39947-Q5VNM3"/>
<dbReference type="EnsemblPlants" id="Os01t0639100-01">
    <property type="protein sequence ID" value="Os01t0639100-01"/>
    <property type="gene ID" value="Os01g0639100"/>
</dbReference>
<dbReference type="GeneID" id="4326580"/>
<dbReference type="Gramene" id="Os01t0639100-01">
    <property type="protein sequence ID" value="Os01t0639100-01"/>
    <property type="gene ID" value="Os01g0639100"/>
</dbReference>
<dbReference type="KEGG" id="dosa:Os01g0639100"/>
<dbReference type="eggNOG" id="KOG0328">
    <property type="taxonomic scope" value="Eukaryota"/>
</dbReference>
<dbReference type="HOGENOM" id="CLU_003041_1_0_1"/>
<dbReference type="InParanoid" id="Q5VNM3"/>
<dbReference type="OMA" id="TRFHDFK"/>
<dbReference type="OrthoDB" id="10265785at2759"/>
<dbReference type="Proteomes" id="UP000000763">
    <property type="component" value="Chromosome 1"/>
</dbReference>
<dbReference type="Proteomes" id="UP000007752">
    <property type="component" value="Chromosome 1"/>
</dbReference>
<dbReference type="Proteomes" id="UP000059680">
    <property type="component" value="Chromosome 1"/>
</dbReference>
<dbReference type="GO" id="GO:0071013">
    <property type="term" value="C:catalytic step 2 spliceosome"/>
    <property type="evidence" value="ECO:0000318"/>
    <property type="project" value="GO_Central"/>
</dbReference>
<dbReference type="GO" id="GO:0005737">
    <property type="term" value="C:cytoplasm"/>
    <property type="evidence" value="ECO:0007669"/>
    <property type="project" value="UniProtKB-SubCell"/>
</dbReference>
<dbReference type="GO" id="GO:0005730">
    <property type="term" value="C:nucleolus"/>
    <property type="evidence" value="ECO:0000318"/>
    <property type="project" value="GO_Central"/>
</dbReference>
<dbReference type="GO" id="GO:0005524">
    <property type="term" value="F:ATP binding"/>
    <property type="evidence" value="ECO:0007669"/>
    <property type="project" value="UniProtKB-KW"/>
</dbReference>
<dbReference type="GO" id="GO:0016887">
    <property type="term" value="F:ATP hydrolysis activity"/>
    <property type="evidence" value="ECO:0007669"/>
    <property type="project" value="RHEA"/>
</dbReference>
<dbReference type="GO" id="GO:0003729">
    <property type="term" value="F:mRNA binding"/>
    <property type="evidence" value="ECO:0000318"/>
    <property type="project" value="GO_Central"/>
</dbReference>
<dbReference type="GO" id="GO:0003724">
    <property type="term" value="F:RNA helicase activity"/>
    <property type="evidence" value="ECO:0000318"/>
    <property type="project" value="GO_Central"/>
</dbReference>
<dbReference type="GO" id="GO:0000398">
    <property type="term" value="P:mRNA splicing, via spliceosome"/>
    <property type="evidence" value="ECO:0000318"/>
    <property type="project" value="GO_Central"/>
</dbReference>
<dbReference type="GO" id="GO:0051028">
    <property type="term" value="P:mRNA transport"/>
    <property type="evidence" value="ECO:0007669"/>
    <property type="project" value="UniProtKB-KW"/>
</dbReference>
<dbReference type="GO" id="GO:0000184">
    <property type="term" value="P:nuclear-transcribed mRNA catabolic process, nonsense-mediated decay"/>
    <property type="evidence" value="ECO:0007669"/>
    <property type="project" value="UniProtKB-KW"/>
</dbReference>
<dbReference type="GO" id="GO:0006417">
    <property type="term" value="P:regulation of translation"/>
    <property type="evidence" value="ECO:0007669"/>
    <property type="project" value="UniProtKB-KW"/>
</dbReference>
<dbReference type="CDD" id="cd18045">
    <property type="entry name" value="DEADc_EIF4AIII_DDX48"/>
    <property type="match status" value="1"/>
</dbReference>
<dbReference type="CDD" id="cd18787">
    <property type="entry name" value="SF2_C_DEAD"/>
    <property type="match status" value="1"/>
</dbReference>
<dbReference type="FunFam" id="3.40.50.300:FF:000031">
    <property type="entry name" value="Eukaryotic initiation factor 4A-III"/>
    <property type="match status" value="1"/>
</dbReference>
<dbReference type="FunFam" id="3.40.50.300:FF:000498">
    <property type="entry name" value="Eukaryotic initiation factor 4A-III"/>
    <property type="match status" value="1"/>
</dbReference>
<dbReference type="Gene3D" id="3.40.50.300">
    <property type="entry name" value="P-loop containing nucleotide triphosphate hydrolases"/>
    <property type="match status" value="2"/>
</dbReference>
<dbReference type="InterPro" id="IPR011545">
    <property type="entry name" value="DEAD/DEAH_box_helicase_dom"/>
</dbReference>
<dbReference type="InterPro" id="IPR014001">
    <property type="entry name" value="Helicase_ATP-bd"/>
</dbReference>
<dbReference type="InterPro" id="IPR001650">
    <property type="entry name" value="Helicase_C-like"/>
</dbReference>
<dbReference type="InterPro" id="IPR027417">
    <property type="entry name" value="P-loop_NTPase"/>
</dbReference>
<dbReference type="InterPro" id="IPR000629">
    <property type="entry name" value="RNA-helicase_DEAD-box_CS"/>
</dbReference>
<dbReference type="InterPro" id="IPR014014">
    <property type="entry name" value="RNA_helicase_DEAD_Q_motif"/>
</dbReference>
<dbReference type="PANTHER" id="PTHR47958">
    <property type="entry name" value="ATP-DEPENDENT RNA HELICASE DBP3"/>
    <property type="match status" value="1"/>
</dbReference>
<dbReference type="Pfam" id="PF00270">
    <property type="entry name" value="DEAD"/>
    <property type="match status" value="1"/>
</dbReference>
<dbReference type="Pfam" id="PF00271">
    <property type="entry name" value="Helicase_C"/>
    <property type="match status" value="1"/>
</dbReference>
<dbReference type="SMART" id="SM00487">
    <property type="entry name" value="DEXDc"/>
    <property type="match status" value="1"/>
</dbReference>
<dbReference type="SMART" id="SM00490">
    <property type="entry name" value="HELICc"/>
    <property type="match status" value="1"/>
</dbReference>
<dbReference type="SUPFAM" id="SSF52540">
    <property type="entry name" value="P-loop containing nucleoside triphosphate hydrolases"/>
    <property type="match status" value="1"/>
</dbReference>
<dbReference type="PROSITE" id="PS00039">
    <property type="entry name" value="DEAD_ATP_HELICASE"/>
    <property type="match status" value="1"/>
</dbReference>
<dbReference type="PROSITE" id="PS51192">
    <property type="entry name" value="HELICASE_ATP_BIND_1"/>
    <property type="match status" value="1"/>
</dbReference>
<dbReference type="PROSITE" id="PS51194">
    <property type="entry name" value="HELICASE_CTER"/>
    <property type="match status" value="1"/>
</dbReference>
<dbReference type="PROSITE" id="PS51195">
    <property type="entry name" value="Q_MOTIF"/>
    <property type="match status" value="1"/>
</dbReference>
<keyword id="KW-0067">ATP-binding</keyword>
<keyword id="KW-0963">Cytoplasm</keyword>
<keyword id="KW-0347">Helicase</keyword>
<keyword id="KW-0378">Hydrolase</keyword>
<keyword id="KW-0507">mRNA processing</keyword>
<keyword id="KW-0508">mRNA splicing</keyword>
<keyword id="KW-0509">mRNA transport</keyword>
<keyword id="KW-0866">Nonsense-mediated mRNA decay</keyword>
<keyword id="KW-0547">Nucleotide-binding</keyword>
<keyword id="KW-0539">Nucleus</keyword>
<keyword id="KW-1185">Reference proteome</keyword>
<keyword id="KW-0694">RNA-binding</keyword>
<keyword id="KW-0810">Translation regulation</keyword>
<keyword id="KW-0813">Transport</keyword>
<protein>
    <recommendedName>
        <fullName evidence="7">Eukaryotic initiation factor 4A-III homolog A</fullName>
        <shortName evidence="6">OseIF4AIIIa</shortName>
        <shortName evidence="7">eIF-4A-III</shortName>
        <shortName evidence="7">eIF4A-III</shortName>
        <ecNumber evidence="7">3.6.4.13</ecNumber>
    </recommendedName>
    <alternativeName>
        <fullName evidence="6">DEAD-box ATP-dependent RNA helicase 2</fullName>
        <shortName evidence="6">OsRH2</shortName>
    </alternativeName>
</protein>
<organism>
    <name type="scientific">Oryza sativa subsp. japonica</name>
    <name type="common">Rice</name>
    <dbReference type="NCBI Taxonomy" id="39947"/>
    <lineage>
        <taxon>Eukaryota</taxon>
        <taxon>Viridiplantae</taxon>
        <taxon>Streptophyta</taxon>
        <taxon>Embryophyta</taxon>
        <taxon>Tracheophyta</taxon>
        <taxon>Spermatophyta</taxon>
        <taxon>Magnoliopsida</taxon>
        <taxon>Liliopsida</taxon>
        <taxon>Poales</taxon>
        <taxon>Poaceae</taxon>
        <taxon>BOP clade</taxon>
        <taxon>Oryzoideae</taxon>
        <taxon>Oryzeae</taxon>
        <taxon>Oryzinae</taxon>
        <taxon>Oryza</taxon>
        <taxon>Oryza sativa</taxon>
    </lineage>
</organism>
<comment type="function">
    <text evidence="1 5">ATP-dependent RNA helicase. Core component of the splicing-dependent multiprotein exon junction complex (EJC) deposited at splice junctions on mRNAs. The EJC is a dynamic structure consisting of core proteins and several peripheral nuclear and cytoplasmic associated factors that join the complex only transiently either during EJC assembly or during subsequent mRNA metabolism. The EJC marks the position of the exon-exon junction in the mature mRNA for the gene expression machinery and the core components remain bound to spliced mRNAs throughout all stages of mRNA metabolism thereby influencing downstream processes including nuclear mRNA export, subcellular mRNA localization, translation efficiency and nonsense-mediated mRNA decay (NMD). Its RNA-dependent ATPase and RNA-helicase activities are induced by MLN51/CASC3, but abolished in presence of the MAGO-Y14 heterodimer, thereby trapping the ATP-bound EJC core onto spliced mRNA in a stable conformation. The inhibition of ATPase activity by the MAGO-Y14 heterodimer increases the RNA-binding affinity of the EJC (By similarity). EJC core proteins play essential roles in rice development, growth and reproduction. Regulates the splicing of UDT1 (UNDEVELOPED TAPETUM 1) pre-mRNA transcript. UDT1 is a key regulator in stamen development (PubMed:27071313).</text>
</comment>
<comment type="catalytic activity">
    <reaction evidence="7">
        <text>ATP + H2O = ADP + phosphate + H(+)</text>
        <dbReference type="Rhea" id="RHEA:13065"/>
        <dbReference type="ChEBI" id="CHEBI:15377"/>
        <dbReference type="ChEBI" id="CHEBI:15378"/>
        <dbReference type="ChEBI" id="CHEBI:30616"/>
        <dbReference type="ChEBI" id="CHEBI:43474"/>
        <dbReference type="ChEBI" id="CHEBI:456216"/>
        <dbReference type="EC" id="3.6.4.13"/>
    </reaction>
</comment>
<comment type="subunit">
    <text evidence="5">Interacts with MAGO1 and Y14B.</text>
</comment>
<comment type="subcellular location">
    <subcellularLocation>
        <location evidence="5">Nucleus</location>
    </subcellularLocation>
    <subcellularLocation>
        <location evidence="5">Cytoplasm</location>
    </subcellularLocation>
    <text evidence="1">Nucleocytoplasmic shuttling protein. Travels to the cytoplasm as part of the exon junction complex (EJC) bound to mRNA.</text>
</comment>
<comment type="tissue specificity">
    <text evidence="5">Expressed in roots, leaves, flowers and seeds.</text>
</comment>
<comment type="domain">
    <text evidence="7">The Q motif is unique to and characteristic of the DEAD box family of RNA helicases and controls ATP binding and hydrolysis.</text>
</comment>
<comment type="similarity">
    <text evidence="7">Belongs to the DEAD box helicase family. DDX48/FAL1 subfamily.</text>
</comment>
<reference key="1">
    <citation type="journal article" date="2002" name="Nature">
        <title>The genome sequence and structure of rice chromosome 1.</title>
        <authorList>
            <person name="Sasaki T."/>
            <person name="Matsumoto T."/>
            <person name="Yamamoto K."/>
            <person name="Sakata K."/>
            <person name="Baba T."/>
            <person name="Katayose Y."/>
            <person name="Wu J."/>
            <person name="Niimura Y."/>
            <person name="Cheng Z."/>
            <person name="Nagamura Y."/>
            <person name="Antonio B.A."/>
            <person name="Kanamori H."/>
            <person name="Hosokawa S."/>
            <person name="Masukawa M."/>
            <person name="Arikawa K."/>
            <person name="Chiden Y."/>
            <person name="Hayashi M."/>
            <person name="Okamoto M."/>
            <person name="Ando T."/>
            <person name="Aoki H."/>
            <person name="Arita K."/>
            <person name="Hamada M."/>
            <person name="Harada C."/>
            <person name="Hijishita S."/>
            <person name="Honda M."/>
            <person name="Ichikawa Y."/>
            <person name="Idonuma A."/>
            <person name="Iijima M."/>
            <person name="Ikeda M."/>
            <person name="Ikeno M."/>
            <person name="Ito S."/>
            <person name="Ito T."/>
            <person name="Ito Y."/>
            <person name="Ito Y."/>
            <person name="Iwabuchi A."/>
            <person name="Kamiya K."/>
            <person name="Karasawa W."/>
            <person name="Katagiri S."/>
            <person name="Kikuta A."/>
            <person name="Kobayashi N."/>
            <person name="Kono I."/>
            <person name="Machita K."/>
            <person name="Maehara T."/>
            <person name="Mizuno H."/>
            <person name="Mizubayashi T."/>
            <person name="Mukai Y."/>
            <person name="Nagasaki H."/>
            <person name="Nakashima M."/>
            <person name="Nakama Y."/>
            <person name="Nakamichi Y."/>
            <person name="Nakamura M."/>
            <person name="Namiki N."/>
            <person name="Negishi M."/>
            <person name="Ohta I."/>
            <person name="Ono N."/>
            <person name="Saji S."/>
            <person name="Sakai K."/>
            <person name="Shibata M."/>
            <person name="Shimokawa T."/>
            <person name="Shomura A."/>
            <person name="Song J."/>
            <person name="Takazaki Y."/>
            <person name="Terasawa K."/>
            <person name="Tsuji K."/>
            <person name="Waki K."/>
            <person name="Yamagata H."/>
            <person name="Yamane H."/>
            <person name="Yoshiki S."/>
            <person name="Yoshihara R."/>
            <person name="Yukawa K."/>
            <person name="Zhong H."/>
            <person name="Iwama H."/>
            <person name="Endo T."/>
            <person name="Ito H."/>
            <person name="Hahn J.H."/>
            <person name="Kim H.-I."/>
            <person name="Eun M.-Y."/>
            <person name="Yano M."/>
            <person name="Jiang J."/>
            <person name="Gojobori T."/>
        </authorList>
    </citation>
    <scope>NUCLEOTIDE SEQUENCE [LARGE SCALE GENOMIC DNA]</scope>
    <source>
        <strain>cv. Nipponbare</strain>
    </source>
</reference>
<reference key="2">
    <citation type="journal article" date="2005" name="Nature">
        <title>The map-based sequence of the rice genome.</title>
        <authorList>
            <consortium name="International rice genome sequencing project (IRGSP)"/>
        </authorList>
    </citation>
    <scope>NUCLEOTIDE SEQUENCE [LARGE SCALE GENOMIC DNA]</scope>
    <source>
        <strain>cv. Nipponbare</strain>
    </source>
</reference>
<reference key="3">
    <citation type="journal article" date="2008" name="Nucleic Acids Res.">
        <title>The rice annotation project database (RAP-DB): 2008 update.</title>
        <authorList>
            <consortium name="The rice annotation project (RAP)"/>
        </authorList>
    </citation>
    <scope>GENOME REANNOTATION</scope>
    <source>
        <strain>cv. Nipponbare</strain>
    </source>
</reference>
<reference key="4">
    <citation type="journal article" date="2013" name="Rice">
        <title>Improvement of the Oryza sativa Nipponbare reference genome using next generation sequence and optical map data.</title>
        <authorList>
            <person name="Kawahara Y."/>
            <person name="de la Bastide M."/>
            <person name="Hamilton J.P."/>
            <person name="Kanamori H."/>
            <person name="McCombie W.R."/>
            <person name="Ouyang S."/>
            <person name="Schwartz D.C."/>
            <person name="Tanaka T."/>
            <person name="Wu J."/>
            <person name="Zhou S."/>
            <person name="Childs K.L."/>
            <person name="Davidson R.M."/>
            <person name="Lin H."/>
            <person name="Quesada-Ocampo L."/>
            <person name="Vaillancourt B."/>
            <person name="Sakai H."/>
            <person name="Lee S.S."/>
            <person name="Kim J."/>
            <person name="Numa H."/>
            <person name="Itoh T."/>
            <person name="Buell C.R."/>
            <person name="Matsumoto T."/>
        </authorList>
    </citation>
    <scope>GENOME REANNOTATION</scope>
    <source>
        <strain>cv. Nipponbare</strain>
    </source>
</reference>
<reference key="5">
    <citation type="journal article" date="2005" name="PLoS Biol.">
        <title>The genomes of Oryza sativa: a history of duplications.</title>
        <authorList>
            <person name="Yu J."/>
            <person name="Wang J."/>
            <person name="Lin W."/>
            <person name="Li S."/>
            <person name="Li H."/>
            <person name="Zhou J."/>
            <person name="Ni P."/>
            <person name="Dong W."/>
            <person name="Hu S."/>
            <person name="Zeng C."/>
            <person name="Zhang J."/>
            <person name="Zhang Y."/>
            <person name="Li R."/>
            <person name="Xu Z."/>
            <person name="Li S."/>
            <person name="Li X."/>
            <person name="Zheng H."/>
            <person name="Cong L."/>
            <person name="Lin L."/>
            <person name="Yin J."/>
            <person name="Geng J."/>
            <person name="Li G."/>
            <person name="Shi J."/>
            <person name="Liu J."/>
            <person name="Lv H."/>
            <person name="Li J."/>
            <person name="Wang J."/>
            <person name="Deng Y."/>
            <person name="Ran L."/>
            <person name="Shi X."/>
            <person name="Wang X."/>
            <person name="Wu Q."/>
            <person name="Li C."/>
            <person name="Ren X."/>
            <person name="Wang J."/>
            <person name="Wang X."/>
            <person name="Li D."/>
            <person name="Liu D."/>
            <person name="Zhang X."/>
            <person name="Ji Z."/>
            <person name="Zhao W."/>
            <person name="Sun Y."/>
            <person name="Zhang Z."/>
            <person name="Bao J."/>
            <person name="Han Y."/>
            <person name="Dong L."/>
            <person name="Ji J."/>
            <person name="Chen P."/>
            <person name="Wu S."/>
            <person name="Liu J."/>
            <person name="Xiao Y."/>
            <person name="Bu D."/>
            <person name="Tan J."/>
            <person name="Yang L."/>
            <person name="Ye C."/>
            <person name="Zhang J."/>
            <person name="Xu J."/>
            <person name="Zhou Y."/>
            <person name="Yu Y."/>
            <person name="Zhang B."/>
            <person name="Zhuang S."/>
            <person name="Wei H."/>
            <person name="Liu B."/>
            <person name="Lei M."/>
            <person name="Yu H."/>
            <person name="Li Y."/>
            <person name="Xu H."/>
            <person name="Wei S."/>
            <person name="He X."/>
            <person name="Fang L."/>
            <person name="Zhang Z."/>
            <person name="Zhang Y."/>
            <person name="Huang X."/>
            <person name="Su Z."/>
            <person name="Tong W."/>
            <person name="Li J."/>
            <person name="Tong Z."/>
            <person name="Li S."/>
            <person name="Ye J."/>
            <person name="Wang L."/>
            <person name="Fang L."/>
            <person name="Lei T."/>
            <person name="Chen C.-S."/>
            <person name="Chen H.-C."/>
            <person name="Xu Z."/>
            <person name="Li H."/>
            <person name="Huang H."/>
            <person name="Zhang F."/>
            <person name="Xu H."/>
            <person name="Li N."/>
            <person name="Zhao C."/>
            <person name="Li S."/>
            <person name="Dong L."/>
            <person name="Huang Y."/>
            <person name="Li L."/>
            <person name="Xi Y."/>
            <person name="Qi Q."/>
            <person name="Li W."/>
            <person name="Zhang B."/>
            <person name="Hu W."/>
            <person name="Zhang Y."/>
            <person name="Tian X."/>
            <person name="Jiao Y."/>
            <person name="Liang X."/>
            <person name="Jin J."/>
            <person name="Gao L."/>
            <person name="Zheng W."/>
            <person name="Hao B."/>
            <person name="Liu S.-M."/>
            <person name="Wang W."/>
            <person name="Yuan L."/>
            <person name="Cao M."/>
            <person name="McDermott J."/>
            <person name="Samudrala R."/>
            <person name="Wang J."/>
            <person name="Wong G.K.-S."/>
            <person name="Yang H."/>
        </authorList>
    </citation>
    <scope>NUCLEOTIDE SEQUENCE [LARGE SCALE GENOMIC DNA]</scope>
    <source>
        <strain>cv. Nipponbare</strain>
    </source>
</reference>
<reference key="6">
    <citation type="journal article" date="2003" name="Science">
        <title>Collection, mapping, and annotation of over 28,000 cDNA clones from japonica rice.</title>
        <authorList>
            <consortium name="The rice full-length cDNA consortium"/>
        </authorList>
    </citation>
    <scope>NUCLEOTIDE SEQUENCE [LARGE SCALE MRNA]</scope>
    <source>
        <strain>cv. Nipponbare</strain>
    </source>
</reference>
<reference key="7">
    <citation type="journal article" date="2016" name="BMC Plant Biol.">
        <title>Two highly similar DEAD box proteins, OsRH2 and OsRH34, homologous to eukaryotic initiation factor 4AIII, play roles of the exon junction complex in regulating growth and development in rice.</title>
        <authorList>
            <person name="Huang C.K."/>
            <person name="Sie Y.S."/>
            <person name="Chen Y.F."/>
            <person name="Huang T.S."/>
            <person name="Lu C.A."/>
        </authorList>
    </citation>
    <scope>FUNCTION</scope>
    <scope>INTERACTION WITH MAGO1 AND Y14B</scope>
    <scope>SUBCELLULAR LOCATION</scope>
    <scope>TISSUE SPECIFICITY</scope>
</reference>
<proteinExistence type="evidence at protein level"/>